<sequence>MEAERINLIGTTLEDLTERTQELRRYLDYDAKFERLRTVNASLEDPAVWNDPKKAQELGKEKKSLDAVVLTLQKLTTELADNAELYEMSKEEGDEAGLTTIEAEAEKLRPLIEELEFRRMFSNEADPLNCFVDIQAGAGGTEACDWASMLLRQYLKYAERKGFKATVEEETPGDVAGIKSATIKIEGEYAYGLLRTETGVHRLVRKSPFDSSGGRHTSFASLFVYPEIDDSIEININPSDVRTDTYRASGAGGQHINKTDSAVRLTHIPTGIVVQCQDGRSQHSNRDVAWQRLRSRLYDFEMRKRMEEQQKLEDTKTDVGWGHQIRSYVLDNSRIKDLRTNVEVSATQKVLDGDLDVFIEASLKQGV</sequence>
<accession>A1W9H4</accession>
<gene>
    <name evidence="1" type="primary">prfB</name>
    <name type="ordered locus">Ajs_2758</name>
</gene>
<comment type="function">
    <text evidence="1">Peptide chain release factor 2 directs the termination of translation in response to the peptide chain termination codons UGA and UAA.</text>
</comment>
<comment type="subcellular location">
    <subcellularLocation>
        <location evidence="1">Cytoplasm</location>
    </subcellularLocation>
</comment>
<comment type="PTM">
    <text evidence="1">Methylated by PrmC. Methylation increases the termination efficiency of RF2.</text>
</comment>
<comment type="similarity">
    <text evidence="1">Belongs to the prokaryotic/mitochondrial release factor family.</text>
</comment>
<keyword id="KW-0963">Cytoplasm</keyword>
<keyword id="KW-0488">Methylation</keyword>
<keyword id="KW-0648">Protein biosynthesis</keyword>
<reference key="1">
    <citation type="submission" date="2006-12" db="EMBL/GenBank/DDBJ databases">
        <title>Complete sequence of chromosome 1 of Acidovorax sp. JS42.</title>
        <authorList>
            <person name="Copeland A."/>
            <person name="Lucas S."/>
            <person name="Lapidus A."/>
            <person name="Barry K."/>
            <person name="Detter J.C."/>
            <person name="Glavina del Rio T."/>
            <person name="Dalin E."/>
            <person name="Tice H."/>
            <person name="Pitluck S."/>
            <person name="Chertkov O."/>
            <person name="Brettin T."/>
            <person name="Bruce D."/>
            <person name="Han C."/>
            <person name="Tapia R."/>
            <person name="Gilna P."/>
            <person name="Schmutz J."/>
            <person name="Larimer F."/>
            <person name="Land M."/>
            <person name="Hauser L."/>
            <person name="Kyrpides N."/>
            <person name="Kim E."/>
            <person name="Stahl D."/>
            <person name="Richardson P."/>
        </authorList>
    </citation>
    <scope>NUCLEOTIDE SEQUENCE [LARGE SCALE GENOMIC DNA]</scope>
    <source>
        <strain>JS42</strain>
    </source>
</reference>
<name>RF2_ACISJ</name>
<proteinExistence type="inferred from homology"/>
<dbReference type="EMBL" id="CP000539">
    <property type="protein sequence ID" value="ABM42899.1"/>
    <property type="molecule type" value="Genomic_DNA"/>
</dbReference>
<dbReference type="SMR" id="A1W9H4"/>
<dbReference type="STRING" id="232721.Ajs_2758"/>
<dbReference type="KEGG" id="ajs:Ajs_2758"/>
<dbReference type="eggNOG" id="COG1186">
    <property type="taxonomic scope" value="Bacteria"/>
</dbReference>
<dbReference type="HOGENOM" id="CLU_220733_0_1_4"/>
<dbReference type="Proteomes" id="UP000000645">
    <property type="component" value="Chromosome"/>
</dbReference>
<dbReference type="GO" id="GO:0005737">
    <property type="term" value="C:cytoplasm"/>
    <property type="evidence" value="ECO:0007669"/>
    <property type="project" value="UniProtKB-SubCell"/>
</dbReference>
<dbReference type="GO" id="GO:0016149">
    <property type="term" value="F:translation release factor activity, codon specific"/>
    <property type="evidence" value="ECO:0007669"/>
    <property type="project" value="UniProtKB-UniRule"/>
</dbReference>
<dbReference type="FunFam" id="3.30.160.20:FF:000010">
    <property type="entry name" value="Peptide chain release factor 2"/>
    <property type="match status" value="1"/>
</dbReference>
<dbReference type="Gene3D" id="3.30.160.20">
    <property type="match status" value="1"/>
</dbReference>
<dbReference type="Gene3D" id="3.30.70.1660">
    <property type="match status" value="1"/>
</dbReference>
<dbReference type="Gene3D" id="1.20.58.410">
    <property type="entry name" value="Release factor"/>
    <property type="match status" value="1"/>
</dbReference>
<dbReference type="HAMAP" id="MF_00094">
    <property type="entry name" value="Rel_fac_2"/>
    <property type="match status" value="1"/>
</dbReference>
<dbReference type="InterPro" id="IPR005139">
    <property type="entry name" value="PCRF"/>
</dbReference>
<dbReference type="InterPro" id="IPR000352">
    <property type="entry name" value="Pep_chain_release_fac_I"/>
</dbReference>
<dbReference type="InterPro" id="IPR045853">
    <property type="entry name" value="Pep_chain_release_fac_I_sf"/>
</dbReference>
<dbReference type="InterPro" id="IPR004374">
    <property type="entry name" value="PrfB"/>
</dbReference>
<dbReference type="NCBIfam" id="TIGR00020">
    <property type="entry name" value="prfB"/>
    <property type="match status" value="1"/>
</dbReference>
<dbReference type="PANTHER" id="PTHR43116:SF3">
    <property type="entry name" value="CLASS I PEPTIDE CHAIN RELEASE FACTOR"/>
    <property type="match status" value="1"/>
</dbReference>
<dbReference type="PANTHER" id="PTHR43116">
    <property type="entry name" value="PEPTIDE CHAIN RELEASE FACTOR 2"/>
    <property type="match status" value="1"/>
</dbReference>
<dbReference type="Pfam" id="PF03462">
    <property type="entry name" value="PCRF"/>
    <property type="match status" value="1"/>
</dbReference>
<dbReference type="Pfam" id="PF00472">
    <property type="entry name" value="RF-1"/>
    <property type="match status" value="1"/>
</dbReference>
<dbReference type="SMART" id="SM00937">
    <property type="entry name" value="PCRF"/>
    <property type="match status" value="1"/>
</dbReference>
<dbReference type="SUPFAM" id="SSF75620">
    <property type="entry name" value="Release factor"/>
    <property type="match status" value="1"/>
</dbReference>
<dbReference type="PROSITE" id="PS00745">
    <property type="entry name" value="RF_PROK_I"/>
    <property type="match status" value="1"/>
</dbReference>
<evidence type="ECO:0000255" key="1">
    <source>
        <dbReference type="HAMAP-Rule" id="MF_00094"/>
    </source>
</evidence>
<protein>
    <recommendedName>
        <fullName evidence="1">Peptide chain release factor 2</fullName>
        <shortName evidence="1">RF-2</shortName>
    </recommendedName>
</protein>
<organism>
    <name type="scientific">Acidovorax sp. (strain JS42)</name>
    <dbReference type="NCBI Taxonomy" id="232721"/>
    <lineage>
        <taxon>Bacteria</taxon>
        <taxon>Pseudomonadati</taxon>
        <taxon>Pseudomonadota</taxon>
        <taxon>Betaproteobacteria</taxon>
        <taxon>Burkholderiales</taxon>
        <taxon>Comamonadaceae</taxon>
        <taxon>Acidovorax</taxon>
    </lineage>
</organism>
<feature type="chain" id="PRO_1000093531" description="Peptide chain release factor 2">
    <location>
        <begin position="1"/>
        <end position="367"/>
    </location>
</feature>
<feature type="modified residue" description="N5-methylglutamine" evidence="1">
    <location>
        <position position="254"/>
    </location>
</feature>